<evidence type="ECO:0000255" key="1"/>
<evidence type="ECO:0000256" key="2">
    <source>
        <dbReference type="SAM" id="MobiDB-lite"/>
    </source>
</evidence>
<evidence type="ECO:0000269" key="3">
    <source>
    </source>
</evidence>
<evidence type="ECO:0000269" key="4">
    <source>
    </source>
</evidence>
<evidence type="ECO:0000269" key="5">
    <source>
    </source>
</evidence>
<evidence type="ECO:0000269" key="6">
    <source>
    </source>
</evidence>
<evidence type="ECO:0000305" key="7"/>
<comment type="function">
    <text evidence="3 4 6">Involved in cell wall organization and biosynthesis.</text>
</comment>
<comment type="subcellular location">
    <subcellularLocation>
        <location>Secreted</location>
        <location>Cell wall</location>
    </subcellularLocation>
    <subcellularLocation>
        <location>Membrane</location>
        <topology>Lipid-anchor</topology>
        <topology>GPI-anchor</topology>
    </subcellularLocation>
    <text>Covalently-linked GPI-modified cell wall protein (GPI-CWP), enriched at bud sites and their neighborhood.</text>
</comment>
<comment type="domain">
    <text>The number of the intragenic tandem repeats varies between different S.cerevisiae strains.</text>
</comment>
<comment type="PTM">
    <text>The GPI-anchor is attached to the protein in the endoplasmic reticulum and serves to target the protein to the cell surface. There, the glucosamine-inositol phospholipid moiety is cleaved off and the GPI-modified mannoprotein is covalently attached via its lipidless GPI glycan remnant to the 1,6-beta-glucan of the outer cell wall layer.</text>
</comment>
<comment type="biotechnology">
    <text evidence="3 6">Probable mannoprotein called haze protective factor from wine that is able to prevent visible wine protein haze formation. This mannoprotein showed haze-protective activity against wine proteins and BSA when either was heated in white wine.</text>
</comment>
<comment type="similarity">
    <text evidence="7">Belongs to the SRP1/TIP1 family.</text>
</comment>
<comment type="sequence caution" evidence="7">
    <conflict type="miscellaneous discrepancy">
        <sequence resource="EMBL-CDS" id="CAA61860"/>
    </conflict>
    <text>Erroneous sequence assembling in the Ser-rich region leading to a longer sequence.</text>
</comment>
<comment type="online information" name="Protein Spotlight">
    <link uri="https://www.proteinspotlight.org/back_issues/078"/>
    <text>Of froth and haze - Issue 78 of January 2007</text>
</comment>
<dbReference type="EMBL" id="X89715">
    <property type="protein sequence ID" value="CAA61860.1"/>
    <property type="status" value="ALT_SEQ"/>
    <property type="molecule type" value="Genomic_DNA"/>
</dbReference>
<dbReference type="EMBL" id="Z74897">
    <property type="protein sequence ID" value="CAA99177.1"/>
    <property type="molecule type" value="Genomic_DNA"/>
</dbReference>
<dbReference type="EMBL" id="BK006948">
    <property type="protein sequence ID" value="DAA10632.1"/>
    <property type="molecule type" value="Genomic_DNA"/>
</dbReference>
<dbReference type="PIR" id="S66852">
    <property type="entry name" value="S66852"/>
</dbReference>
<dbReference type="RefSeq" id="NP_014487.1">
    <property type="nucleotide sequence ID" value="NM_001183408.1"/>
</dbReference>
<dbReference type="SMR" id="Q05164"/>
<dbReference type="BioGRID" id="34263">
    <property type="interactions" value="100"/>
</dbReference>
<dbReference type="FunCoup" id="Q05164">
    <property type="interactions" value="124"/>
</dbReference>
<dbReference type="IntAct" id="Q05164">
    <property type="interactions" value="1"/>
</dbReference>
<dbReference type="MINT" id="Q05164"/>
<dbReference type="STRING" id="4932.YOL155C"/>
<dbReference type="GlyCosmos" id="Q05164">
    <property type="glycosylation" value="5 sites, No reported glycans"/>
</dbReference>
<dbReference type="GlyGen" id="Q05164">
    <property type="glycosylation" value="6 sites"/>
</dbReference>
<dbReference type="iPTMnet" id="Q05164"/>
<dbReference type="PaxDb" id="4932-YOL155C"/>
<dbReference type="PeptideAtlas" id="Q05164"/>
<dbReference type="EnsemblFungi" id="YOL155C_mRNA">
    <property type="protein sequence ID" value="YOL155C"/>
    <property type="gene ID" value="YOL155C"/>
</dbReference>
<dbReference type="GeneID" id="854010"/>
<dbReference type="KEGG" id="sce:YOL155C"/>
<dbReference type="AGR" id="SGD:S000005515"/>
<dbReference type="SGD" id="S000005515">
    <property type="gene designation" value="HPF1"/>
</dbReference>
<dbReference type="VEuPathDB" id="FungiDB:YOL155C"/>
<dbReference type="eggNOG" id="KOG1216">
    <property type="taxonomic scope" value="Eukaryota"/>
</dbReference>
<dbReference type="GeneTree" id="ENSGT00940000179085"/>
<dbReference type="HOGENOM" id="CLU_016111_1_0_1"/>
<dbReference type="InParanoid" id="Q05164"/>
<dbReference type="OMA" id="GLXRRDD"/>
<dbReference type="OrthoDB" id="4069841at2759"/>
<dbReference type="BioCyc" id="YEAST:G3O-33543-MONOMER"/>
<dbReference type="BioGRID-ORCS" id="854010">
    <property type="hits" value="2 hits in 10 CRISPR screens"/>
</dbReference>
<dbReference type="PRO" id="PR:Q05164"/>
<dbReference type="Proteomes" id="UP000002311">
    <property type="component" value="Chromosome XV"/>
</dbReference>
<dbReference type="RNAct" id="Q05164">
    <property type="molecule type" value="protein"/>
</dbReference>
<dbReference type="GO" id="GO:0071944">
    <property type="term" value="C:cell periphery"/>
    <property type="evidence" value="ECO:0007005"/>
    <property type="project" value="SGD"/>
</dbReference>
<dbReference type="GO" id="GO:0005576">
    <property type="term" value="C:extracellular region"/>
    <property type="evidence" value="ECO:0000314"/>
    <property type="project" value="SGD"/>
</dbReference>
<dbReference type="GO" id="GO:0009277">
    <property type="term" value="C:fungal-type cell wall"/>
    <property type="evidence" value="ECO:0000314"/>
    <property type="project" value="SGD"/>
</dbReference>
<dbReference type="GO" id="GO:0098552">
    <property type="term" value="C:side of membrane"/>
    <property type="evidence" value="ECO:0007669"/>
    <property type="project" value="UniProtKB-KW"/>
</dbReference>
<dbReference type="GO" id="GO:0031505">
    <property type="term" value="P:fungal-type cell wall organization"/>
    <property type="evidence" value="ECO:0000316"/>
    <property type="project" value="SGD"/>
</dbReference>
<dbReference type="InterPro" id="IPR021031">
    <property type="entry name" value="Hyphal-reg_cell_wall_N"/>
</dbReference>
<dbReference type="InterPro" id="IPR052828">
    <property type="entry name" value="NELF-A_domain"/>
</dbReference>
<dbReference type="PANTHER" id="PTHR13328:SF4">
    <property type="entry name" value="NEGATIVE ELONGATION FACTOR A"/>
    <property type="match status" value="1"/>
</dbReference>
<dbReference type="PANTHER" id="PTHR13328">
    <property type="entry name" value="NEGATIVE ELONGATION FACTOR A NELF-A"/>
    <property type="match status" value="1"/>
</dbReference>
<dbReference type="Pfam" id="PF11765">
    <property type="entry name" value="Hyphal_reg_CWP"/>
    <property type="match status" value="1"/>
</dbReference>
<protein>
    <recommendedName>
        <fullName>Haze protective factor 1</fullName>
    </recommendedName>
</protein>
<keyword id="KW-0134">Cell wall</keyword>
<keyword id="KW-0961">Cell wall biogenesis/degradation</keyword>
<keyword id="KW-0903">Direct protein sequencing</keyword>
<keyword id="KW-0325">Glycoprotein</keyword>
<keyword id="KW-0336">GPI-anchor</keyword>
<keyword id="KW-0449">Lipoprotein</keyword>
<keyword id="KW-0472">Membrane</keyword>
<keyword id="KW-1185">Reference proteome</keyword>
<keyword id="KW-0677">Repeat</keyword>
<keyword id="KW-0964">Secreted</keyword>
<keyword id="KW-0732">Signal</keyword>
<feature type="signal peptide" evidence="1">
    <location>
        <begin position="1"/>
        <end position="23"/>
    </location>
</feature>
<feature type="chain" id="PRO_0000268177" description="Haze protective factor 1">
    <location>
        <begin position="24"/>
        <end position="946"/>
    </location>
</feature>
<feature type="propeptide" id="PRO_0000268178" description="Removed in mature form" evidence="1">
    <location>
        <begin position="947"/>
        <end position="967"/>
    </location>
</feature>
<feature type="repeat" description="1-1" evidence="5">
    <location>
        <begin position="93"/>
        <end position="105"/>
    </location>
</feature>
<feature type="repeat" description="1-2" evidence="5">
    <location>
        <begin position="106"/>
        <end position="118"/>
    </location>
</feature>
<feature type="repeat" description="1-3" evidence="5">
    <location>
        <begin position="119"/>
        <end position="131"/>
    </location>
</feature>
<feature type="repeat" description="1-4" evidence="5">
    <location>
        <begin position="132"/>
        <end position="144"/>
    </location>
</feature>
<feature type="repeat" description="1-5" evidence="5">
    <location>
        <begin position="153"/>
        <end position="165"/>
    </location>
</feature>
<feature type="repeat" description="1-6" evidence="5">
    <location>
        <begin position="166"/>
        <end position="178"/>
    </location>
</feature>
<feature type="repeat" description="1-7" evidence="5">
    <location>
        <begin position="179"/>
        <end position="191"/>
    </location>
</feature>
<feature type="repeat" description="1-8" evidence="5">
    <location>
        <begin position="192"/>
        <end position="204"/>
    </location>
</feature>
<feature type="repeat" description="1-9" evidence="5">
    <location>
        <begin position="205"/>
        <end position="217"/>
    </location>
</feature>
<feature type="repeat" description="1-10; approximate" evidence="5">
    <location>
        <begin position="218"/>
        <end position="230"/>
    </location>
</feature>
<feature type="repeat" description="1-11; approximate" evidence="5">
    <location>
        <begin position="234"/>
        <end position="247"/>
    </location>
</feature>
<feature type="repeat" description="1-12; approximate" evidence="5">
    <location>
        <begin position="248"/>
        <end position="259"/>
    </location>
</feature>
<feature type="repeat" description="1-13" evidence="5">
    <location>
        <begin position="266"/>
        <end position="278"/>
    </location>
</feature>
<feature type="repeat" description="2-1" evidence="5">
    <location>
        <begin position="745"/>
        <end position="780"/>
    </location>
</feature>
<feature type="repeat" description="2-2" evidence="5">
    <location>
        <begin position="781"/>
        <end position="815"/>
    </location>
</feature>
<feature type="repeat" description="2-3" evidence="5">
    <location>
        <begin position="816"/>
        <end position="854"/>
    </location>
</feature>
<feature type="repeat" description="2-4" evidence="5">
    <location>
        <begin position="855"/>
        <end position="893"/>
    </location>
</feature>
<feature type="repeat" description="2-5; truncated" evidence="5">
    <location>
        <begin position="894"/>
        <end position="902"/>
    </location>
</feature>
<feature type="region of interest" description="Disordered" evidence="2">
    <location>
        <begin position="72"/>
        <end position="301"/>
    </location>
</feature>
<feature type="region of interest" description="13 X approximate repeats, Ser-rich">
    <location>
        <begin position="93"/>
        <end position="278"/>
    </location>
</feature>
<feature type="region of interest" description="4.5 X approximate tandem repeats, Thr-rich">
    <location>
        <begin position="745"/>
        <end position="902"/>
    </location>
</feature>
<feature type="region of interest" description="Disordered" evidence="2">
    <location>
        <begin position="836"/>
        <end position="857"/>
    </location>
</feature>
<feature type="lipid moiety-binding region" description="GPI-anchor amidated alanine" evidence="1">
    <location>
        <position position="946"/>
    </location>
</feature>
<feature type="glycosylation site" description="N-linked (GlcNAc...) asparagine" evidence="1">
    <location>
        <position position="28"/>
    </location>
</feature>
<feature type="glycosylation site" description="N-linked (GlcNAc...) asparagine" evidence="1">
    <location>
        <position position="35"/>
    </location>
</feature>
<feature type="glycosylation site" description="N-linked (GlcNAc...) asparagine" evidence="1">
    <location>
        <position position="493"/>
    </location>
</feature>
<feature type="glycosylation site" description="N-linked (GlcNAc...) asparagine" evidence="1">
    <location>
        <position position="601"/>
    </location>
</feature>
<feature type="glycosylation site" description="N-linked (GlcNAc...) asparagine" evidence="1">
    <location>
        <position position="638"/>
    </location>
</feature>
<sequence>MFNRFNKLQAALALVLYSQSALGQYYTNSSSIASNSSTAVSSTSSGSVSISSSIELTSSTSDVSSSLTELTSSSTEVSSSIAPSTSSSEVSSSITSSGSSVSGSSSITSSGSSVSSSSSATESGSSASGSSSATESGSSVSGSSTSITSGSSSATESGSSVSGSTSATESGSSASGSSSATESGSSASGSSSATESGSSVSGSSSATESGSSVSGSSSATESGSASSVPSSSGSVTESGSSSSASESSITQSGTASGSSASSTSGSVTQSGSSVSGSSASSAPGISSSIPQSTSSASTASGSITSGTLSSITSSASSATATASNSLSSSDGTIYLPSTTISGDITLTGSVIATEAVEVAAGGKLTLLDGDKYVFSADFIIHGGVFVEKSKPTYPGTEFDISGENFDVSGTFNAEEPAASSASAYSFTPGSFDNSGDISLSLSESTKGEVTFSPYSNSGAFSFSNAILNGGSVSGLQRRAESGSVNNGEINLENGSTYVVVEPVSGSGTINIISGNLYLHYPDTFTGQTVVFKGEGVLAVDPTETNTTPIPVVGYTGENQIAITADVTALSYDSATGVLTATQGNSQFSFSIGTGFSSSGFNVSEGTFAGAYAYYLNYGGVVASSATPSSTSTTSGATNSTSGSTSFGASVTGSTASTSFGASVTGSTASTLISGSPSVYTTTLTYATTTSTVVVSCSETTDSNGNVYTITTTVPCSSTTATITSCDETGCHVTTSTGTVATETVSSKSYTTVTVTHCDNNGCNTKTVTSECPEETSATTTSPKSYTTVTVTHCDDNGCNTKTVTSEAPEATTTTVSPKTYTTATVTQCDDNGCSTKTVTSEAPKETSETSETSAAPKTYTTATVTQCDDNGCNVKIITSQIPEATSTVTATSASPKSYTTVTSEGSKATSLTTAISKASSAISTYSKSAAPIKTSTGIIVQSEGIAAGLNANTLNALVGIFVLAFFN</sequence>
<proteinExistence type="evidence at protein level"/>
<organism>
    <name type="scientific">Saccharomyces cerevisiae (strain ATCC 204508 / S288c)</name>
    <name type="common">Baker's yeast</name>
    <dbReference type="NCBI Taxonomy" id="559292"/>
    <lineage>
        <taxon>Eukaryota</taxon>
        <taxon>Fungi</taxon>
        <taxon>Dikarya</taxon>
        <taxon>Ascomycota</taxon>
        <taxon>Saccharomycotina</taxon>
        <taxon>Saccharomycetes</taxon>
        <taxon>Saccharomycetales</taxon>
        <taxon>Saccharomycetaceae</taxon>
        <taxon>Saccharomyces</taxon>
    </lineage>
</organism>
<name>HPF1_YEAST</name>
<reference key="1">
    <citation type="journal article" date="1996" name="Yeast">
        <title>Analysis of the DNA sequence of a 15,500 bp fragment near the left telomere of chromosome XV from Saccharomyces cerevisiae reveals a putative sugar transporter, a carboxypeptidase homologue and two new open reading frames.</title>
        <authorList>
            <person name="Gamo F.-J."/>
            <person name="Lafuente M.J."/>
            <person name="Casamayor A."/>
            <person name="Arino J."/>
            <person name="Aldea M."/>
            <person name="Casas C."/>
            <person name="Herrero E."/>
            <person name="Gancedo C."/>
        </authorList>
    </citation>
    <scope>NUCLEOTIDE SEQUENCE [GENOMIC DNA]</scope>
    <source>
        <strain>ATCC 96604 / S288c / FY1679</strain>
    </source>
</reference>
<reference key="2">
    <citation type="journal article" date="1997" name="Nature">
        <title>The nucleotide sequence of Saccharomyces cerevisiae chromosome XV.</title>
        <authorList>
            <person name="Dujon B."/>
            <person name="Albermann K."/>
            <person name="Aldea M."/>
            <person name="Alexandraki D."/>
            <person name="Ansorge W."/>
            <person name="Arino J."/>
            <person name="Benes V."/>
            <person name="Bohn C."/>
            <person name="Bolotin-Fukuhara M."/>
            <person name="Bordonne R."/>
            <person name="Boyer J."/>
            <person name="Camasses A."/>
            <person name="Casamayor A."/>
            <person name="Casas C."/>
            <person name="Cheret G."/>
            <person name="Cziepluch C."/>
            <person name="Daignan-Fornier B."/>
            <person name="Dang V.-D."/>
            <person name="de Haan M."/>
            <person name="Delius H."/>
            <person name="Durand P."/>
            <person name="Fairhead C."/>
            <person name="Feldmann H."/>
            <person name="Gaillon L."/>
            <person name="Galisson F."/>
            <person name="Gamo F.-J."/>
            <person name="Gancedo C."/>
            <person name="Goffeau A."/>
            <person name="Goulding S.E."/>
            <person name="Grivell L.A."/>
            <person name="Habbig B."/>
            <person name="Hand N.J."/>
            <person name="Hani J."/>
            <person name="Hattenhorst U."/>
            <person name="Hebling U."/>
            <person name="Hernando Y."/>
            <person name="Herrero E."/>
            <person name="Heumann K."/>
            <person name="Hiesel R."/>
            <person name="Hilger F."/>
            <person name="Hofmann B."/>
            <person name="Hollenberg C.P."/>
            <person name="Hughes B."/>
            <person name="Jauniaux J.-C."/>
            <person name="Kalogeropoulos A."/>
            <person name="Katsoulou C."/>
            <person name="Kordes E."/>
            <person name="Lafuente M.J."/>
            <person name="Landt O."/>
            <person name="Louis E.J."/>
            <person name="Maarse A.C."/>
            <person name="Madania A."/>
            <person name="Mannhaupt G."/>
            <person name="Marck C."/>
            <person name="Martin R.P."/>
            <person name="Mewes H.-W."/>
            <person name="Michaux G."/>
            <person name="Paces V."/>
            <person name="Parle-McDermott A.G."/>
            <person name="Pearson B.M."/>
            <person name="Perrin A."/>
            <person name="Pettersson B."/>
            <person name="Poch O."/>
            <person name="Pohl T.M."/>
            <person name="Poirey R."/>
            <person name="Portetelle D."/>
            <person name="Pujol A."/>
            <person name="Purnelle B."/>
            <person name="Ramezani Rad M."/>
            <person name="Rechmann S."/>
            <person name="Schwager C."/>
            <person name="Schweizer M."/>
            <person name="Sor F."/>
            <person name="Sterky F."/>
            <person name="Tarassov I.A."/>
            <person name="Teodoru C."/>
            <person name="Tettelin H."/>
            <person name="Thierry A."/>
            <person name="Tobiasch E."/>
            <person name="Tzermia M."/>
            <person name="Uhlen M."/>
            <person name="Unseld M."/>
            <person name="Valens M."/>
            <person name="Vandenbol M."/>
            <person name="Vetter I."/>
            <person name="Vlcek C."/>
            <person name="Voet M."/>
            <person name="Volckaert G."/>
            <person name="Voss H."/>
            <person name="Wambutt R."/>
            <person name="Wedler H."/>
            <person name="Wiemann S."/>
            <person name="Winsor B."/>
            <person name="Wolfe K.H."/>
            <person name="Zollner A."/>
            <person name="Zumstein E."/>
            <person name="Kleine K."/>
        </authorList>
    </citation>
    <scope>NUCLEOTIDE SEQUENCE [LARGE SCALE GENOMIC DNA]</scope>
    <source>
        <strain>ATCC 204508 / S288c</strain>
    </source>
</reference>
<reference key="3">
    <citation type="journal article" date="2014" name="G3 (Bethesda)">
        <title>The reference genome sequence of Saccharomyces cerevisiae: Then and now.</title>
        <authorList>
            <person name="Engel S.R."/>
            <person name="Dietrich F.S."/>
            <person name="Fisk D.G."/>
            <person name="Binkley G."/>
            <person name="Balakrishnan R."/>
            <person name="Costanzo M.C."/>
            <person name="Dwight S.S."/>
            <person name="Hitz B.C."/>
            <person name="Karra K."/>
            <person name="Nash R.S."/>
            <person name="Weng S."/>
            <person name="Wong E.D."/>
            <person name="Lloyd P."/>
            <person name="Skrzypek M.S."/>
            <person name="Miyasato S.R."/>
            <person name="Simison M."/>
            <person name="Cherry J.M."/>
        </authorList>
    </citation>
    <scope>GENOME REANNOTATION</scope>
    <source>
        <strain>ATCC 204508 / S288c</strain>
    </source>
</reference>
<reference key="4">
    <citation type="journal article" date="2007" name="Appl. Microbiol. Biotechnol.">
        <title>Reducing haziness in white wine by overexpression of Saccharomyces cerevisiae genes YOL155c and YDR055w.</title>
        <authorList>
            <person name="Brown S.L."/>
            <person name="Stockdale V.J."/>
            <person name="Pettolino F."/>
            <person name="Pocock K.F."/>
            <person name="de Barros Lopes M."/>
            <person name="Williams P.J."/>
            <person name="Bacic A."/>
            <person name="Fincher G.B."/>
            <person name="Hoej P.B."/>
            <person name="Waters E.J."/>
        </authorList>
    </citation>
    <scope>PROTEIN SEQUENCE OF 479-504</scope>
    <scope>FUNCTION</scope>
    <scope>BIOTECHNOLOGY</scope>
</reference>
<reference key="5">
    <citation type="journal article" date="2000" name="J. Agric. Food Chem.">
        <title>Saccharomyces cerevisiae mannoproteins that protect wine from protein haze: evaluation of extraction methods and immunolocalization.</title>
        <authorList>
            <person name="Dupin I.V.S."/>
            <person name="Stockdale V.J."/>
            <person name="Williams P.J."/>
            <person name="Jones G.P."/>
            <person name="Markides A.J."/>
            <person name="Waters E.J."/>
        </authorList>
    </citation>
    <scope>FUNCTION</scope>
    <scope>SUBCELLULAR LOCATION</scope>
    <scope>BIOTECHNOLOGY</scope>
</reference>
<reference key="6">
    <citation type="journal article" date="2001" name="Yeast">
        <title>Cooperative functions of the mannoprotein-encoding genes in the biogenesis and maintenance of the cell wall in Saccharomyces cerevisiae.</title>
        <authorList>
            <person name="Horie T."/>
            <person name="Isono K."/>
        </authorList>
    </citation>
    <scope>FUNCTION</scope>
    <scope>SUBCELLULAR LOCATION</scope>
</reference>
<reference key="7">
    <citation type="journal article" date="2002" name="Curr. Genet.">
        <title>Sequence-based approach for identification of cell wall proteins in Saccharomyces cerevisiae.</title>
        <authorList>
            <person name="Terashima H."/>
            <person name="Fukuchi S."/>
            <person name="Nakai K."/>
            <person name="Arisawa M."/>
            <person name="Hamada K."/>
            <person name="Yabuki N."/>
            <person name="Kitada K."/>
        </authorList>
    </citation>
    <scope>SUBCELLULAR LOCATION</scope>
</reference>
<reference key="8">
    <citation type="journal article" date="2005" name="Nat. Genet.">
        <title>Intragenic tandem repeats generate functional variability.</title>
        <authorList>
            <person name="Verstrepen K.J."/>
            <person name="Jansen A."/>
            <person name="Lewitter F."/>
            <person name="Fink G.R."/>
        </authorList>
    </citation>
    <scope>REPEATS</scope>
</reference>
<accession>Q05164</accession>
<accession>D6W1R6</accession>
<accession>Q08294</accession>
<gene>
    <name type="primary">HPF1</name>
    <name type="ordered locus">YOL155C</name>
    <name type="ORF">AOF1001</name>
</gene>